<organism>
    <name type="scientific">Desulfitobacterium hafniense (strain Y51)</name>
    <dbReference type="NCBI Taxonomy" id="138119"/>
    <lineage>
        <taxon>Bacteria</taxon>
        <taxon>Bacillati</taxon>
        <taxon>Bacillota</taxon>
        <taxon>Clostridia</taxon>
        <taxon>Eubacteriales</taxon>
        <taxon>Desulfitobacteriaceae</taxon>
        <taxon>Desulfitobacterium</taxon>
    </lineage>
</organism>
<protein>
    <recommendedName>
        <fullName evidence="1">Argininosuccinate synthase</fullName>
        <ecNumber evidence="1">6.3.4.5</ecNumber>
    </recommendedName>
    <alternativeName>
        <fullName evidence="1">Citrulline--aspartate ligase</fullName>
    </alternativeName>
</protein>
<reference key="1">
    <citation type="journal article" date="2006" name="J. Bacteriol.">
        <title>Complete genome sequence of the dehalorespiring bacterium Desulfitobacterium hafniense Y51 and comparison with Dehalococcoides ethenogenes 195.</title>
        <authorList>
            <person name="Nonaka H."/>
            <person name="Keresztes G."/>
            <person name="Shinoda Y."/>
            <person name="Ikenaga Y."/>
            <person name="Abe M."/>
            <person name="Naito K."/>
            <person name="Inatomi K."/>
            <person name="Furukawa K."/>
            <person name="Inui M."/>
            <person name="Yukawa H."/>
        </authorList>
    </citation>
    <scope>NUCLEOTIDE SEQUENCE [LARGE SCALE GENOMIC DNA]</scope>
    <source>
        <strain>Y51</strain>
    </source>
</reference>
<feature type="chain" id="PRO_0000263921" description="Argininosuccinate synthase">
    <location>
        <begin position="1"/>
        <end position="409"/>
    </location>
</feature>
<feature type="binding site" evidence="1">
    <location>
        <begin position="15"/>
        <end position="23"/>
    </location>
    <ligand>
        <name>ATP</name>
        <dbReference type="ChEBI" id="CHEBI:30616"/>
    </ligand>
</feature>
<feature type="binding site" evidence="1">
    <location>
        <position position="42"/>
    </location>
    <ligand>
        <name>ATP</name>
        <dbReference type="ChEBI" id="CHEBI:30616"/>
    </ligand>
</feature>
<feature type="binding site" evidence="1">
    <location>
        <position position="93"/>
    </location>
    <ligand>
        <name>L-citrulline</name>
        <dbReference type="ChEBI" id="CHEBI:57743"/>
    </ligand>
</feature>
<feature type="binding site" evidence="1">
    <location>
        <position position="98"/>
    </location>
    <ligand>
        <name>L-citrulline</name>
        <dbReference type="ChEBI" id="CHEBI:57743"/>
    </ligand>
</feature>
<feature type="binding site" evidence="1">
    <location>
        <position position="123"/>
    </location>
    <ligand>
        <name>ATP</name>
        <dbReference type="ChEBI" id="CHEBI:30616"/>
    </ligand>
</feature>
<feature type="binding site" evidence="1">
    <location>
        <position position="125"/>
    </location>
    <ligand>
        <name>L-aspartate</name>
        <dbReference type="ChEBI" id="CHEBI:29991"/>
    </ligand>
</feature>
<feature type="binding site" evidence="1">
    <location>
        <position position="129"/>
    </location>
    <ligand>
        <name>L-aspartate</name>
        <dbReference type="ChEBI" id="CHEBI:29991"/>
    </ligand>
</feature>
<feature type="binding site" evidence="1">
    <location>
        <position position="129"/>
    </location>
    <ligand>
        <name>L-citrulline</name>
        <dbReference type="ChEBI" id="CHEBI:57743"/>
    </ligand>
</feature>
<feature type="binding site" evidence="1">
    <location>
        <position position="130"/>
    </location>
    <ligand>
        <name>L-aspartate</name>
        <dbReference type="ChEBI" id="CHEBI:29991"/>
    </ligand>
</feature>
<feature type="binding site" evidence="1">
    <location>
        <position position="133"/>
    </location>
    <ligand>
        <name>L-citrulline</name>
        <dbReference type="ChEBI" id="CHEBI:57743"/>
    </ligand>
</feature>
<feature type="binding site" evidence="1">
    <location>
        <position position="182"/>
    </location>
    <ligand>
        <name>L-citrulline</name>
        <dbReference type="ChEBI" id="CHEBI:57743"/>
    </ligand>
</feature>
<feature type="binding site" evidence="1">
    <location>
        <position position="191"/>
    </location>
    <ligand>
        <name>L-citrulline</name>
        <dbReference type="ChEBI" id="CHEBI:57743"/>
    </ligand>
</feature>
<feature type="binding site" evidence="1">
    <location>
        <position position="267"/>
    </location>
    <ligand>
        <name>L-citrulline</name>
        <dbReference type="ChEBI" id="CHEBI:57743"/>
    </ligand>
</feature>
<feature type="binding site" evidence="1">
    <location>
        <position position="279"/>
    </location>
    <ligand>
        <name>L-citrulline</name>
        <dbReference type="ChEBI" id="CHEBI:57743"/>
    </ligand>
</feature>
<keyword id="KW-0028">Amino-acid biosynthesis</keyword>
<keyword id="KW-0055">Arginine biosynthesis</keyword>
<keyword id="KW-0067">ATP-binding</keyword>
<keyword id="KW-0963">Cytoplasm</keyword>
<keyword id="KW-0436">Ligase</keyword>
<keyword id="KW-0547">Nucleotide-binding</keyword>
<keyword id="KW-1185">Reference proteome</keyword>
<sequence>MLRKEVIPMKKVVLAYSGGLDTSIIIPWLKENYGYEVIAMAADLGQGEELEPLHEKAIKSGASKLYIEDLQEEFVTDFIYPTLKAGAVYEGKYLLGTSFARPLIAQRLVEIAAKEGAVAIAHGATGKGNDQVRFELAVKALNPDLEIIAPWRIWDIKSREDAIDYAVERGIPVPVTKDRPYSMDRNVWHLSHEGGDLEDPWNEPKKDLYLLGVSPEDAPDEAEYLELDFEQGIPVSLNGEKLGPVQLLETLNEVGGKHGIGIVDMVENRLVGMKSRGVYETPGGTILYTAHQALEHLTLDRLTLHYKEQIALKYAELVYDGVWHSPLREALDAFVDVTQKNVTGTVRLKLYKGNCSLAGVKSPYSLYSEEFATFGRDGVYNQKDAEGFINLFGLPLKVRALMEKKSGLR</sequence>
<gene>
    <name evidence="1" type="primary">argG</name>
    <name type="ordered locus">DSY0785</name>
</gene>
<proteinExistence type="inferred from homology"/>
<dbReference type="EC" id="6.3.4.5" evidence="1"/>
<dbReference type="EMBL" id="AP008230">
    <property type="protein sequence ID" value="BAE82574.1"/>
    <property type="molecule type" value="Genomic_DNA"/>
</dbReference>
<dbReference type="SMR" id="Q24ZG8"/>
<dbReference type="STRING" id="138119.DSY0785"/>
<dbReference type="KEGG" id="dsy:DSY0785"/>
<dbReference type="eggNOG" id="COG0137">
    <property type="taxonomic scope" value="Bacteria"/>
</dbReference>
<dbReference type="HOGENOM" id="CLU_032784_4_2_9"/>
<dbReference type="UniPathway" id="UPA00068">
    <property type="reaction ID" value="UER00113"/>
</dbReference>
<dbReference type="Proteomes" id="UP000001946">
    <property type="component" value="Chromosome"/>
</dbReference>
<dbReference type="GO" id="GO:0005737">
    <property type="term" value="C:cytoplasm"/>
    <property type="evidence" value="ECO:0007669"/>
    <property type="project" value="UniProtKB-SubCell"/>
</dbReference>
<dbReference type="GO" id="GO:0004055">
    <property type="term" value="F:argininosuccinate synthase activity"/>
    <property type="evidence" value="ECO:0007669"/>
    <property type="project" value="UniProtKB-UniRule"/>
</dbReference>
<dbReference type="GO" id="GO:0005524">
    <property type="term" value="F:ATP binding"/>
    <property type="evidence" value="ECO:0007669"/>
    <property type="project" value="UniProtKB-UniRule"/>
</dbReference>
<dbReference type="GO" id="GO:0000053">
    <property type="term" value="P:argininosuccinate metabolic process"/>
    <property type="evidence" value="ECO:0007669"/>
    <property type="project" value="TreeGrafter"/>
</dbReference>
<dbReference type="GO" id="GO:0006526">
    <property type="term" value="P:L-arginine biosynthetic process"/>
    <property type="evidence" value="ECO:0007669"/>
    <property type="project" value="UniProtKB-UniRule"/>
</dbReference>
<dbReference type="GO" id="GO:0000050">
    <property type="term" value="P:urea cycle"/>
    <property type="evidence" value="ECO:0007669"/>
    <property type="project" value="TreeGrafter"/>
</dbReference>
<dbReference type="CDD" id="cd01999">
    <property type="entry name" value="ASS"/>
    <property type="match status" value="1"/>
</dbReference>
<dbReference type="FunFam" id="3.40.50.620:FF:000019">
    <property type="entry name" value="Argininosuccinate synthase"/>
    <property type="match status" value="1"/>
</dbReference>
<dbReference type="FunFam" id="3.90.1260.10:FF:000007">
    <property type="entry name" value="Argininosuccinate synthase"/>
    <property type="match status" value="1"/>
</dbReference>
<dbReference type="Gene3D" id="3.90.1260.10">
    <property type="entry name" value="Argininosuccinate synthetase, chain A, domain 2"/>
    <property type="match status" value="1"/>
</dbReference>
<dbReference type="Gene3D" id="3.40.50.620">
    <property type="entry name" value="HUPs"/>
    <property type="match status" value="1"/>
</dbReference>
<dbReference type="Gene3D" id="1.20.5.470">
    <property type="entry name" value="Single helix bin"/>
    <property type="match status" value="1"/>
</dbReference>
<dbReference type="HAMAP" id="MF_00005">
    <property type="entry name" value="Arg_succ_synth_type1"/>
    <property type="match status" value="1"/>
</dbReference>
<dbReference type="InterPro" id="IPR048268">
    <property type="entry name" value="Arginosuc_syn_C"/>
</dbReference>
<dbReference type="InterPro" id="IPR048267">
    <property type="entry name" value="Arginosuc_syn_N"/>
</dbReference>
<dbReference type="InterPro" id="IPR001518">
    <property type="entry name" value="Arginosuc_synth"/>
</dbReference>
<dbReference type="InterPro" id="IPR018223">
    <property type="entry name" value="Arginosuc_synth_CS"/>
</dbReference>
<dbReference type="InterPro" id="IPR023434">
    <property type="entry name" value="Arginosuc_synth_type_1_subfam"/>
</dbReference>
<dbReference type="InterPro" id="IPR024074">
    <property type="entry name" value="AS_cat/multimer_dom_body"/>
</dbReference>
<dbReference type="InterPro" id="IPR014729">
    <property type="entry name" value="Rossmann-like_a/b/a_fold"/>
</dbReference>
<dbReference type="NCBIfam" id="TIGR00032">
    <property type="entry name" value="argG"/>
    <property type="match status" value="1"/>
</dbReference>
<dbReference type="NCBIfam" id="NF001770">
    <property type="entry name" value="PRK00509.1"/>
    <property type="match status" value="1"/>
</dbReference>
<dbReference type="PANTHER" id="PTHR11587">
    <property type="entry name" value="ARGININOSUCCINATE SYNTHASE"/>
    <property type="match status" value="1"/>
</dbReference>
<dbReference type="PANTHER" id="PTHR11587:SF2">
    <property type="entry name" value="ARGININOSUCCINATE SYNTHASE"/>
    <property type="match status" value="1"/>
</dbReference>
<dbReference type="Pfam" id="PF20979">
    <property type="entry name" value="Arginosuc_syn_C"/>
    <property type="match status" value="1"/>
</dbReference>
<dbReference type="Pfam" id="PF00764">
    <property type="entry name" value="Arginosuc_synth"/>
    <property type="match status" value="1"/>
</dbReference>
<dbReference type="SUPFAM" id="SSF52402">
    <property type="entry name" value="Adenine nucleotide alpha hydrolases-like"/>
    <property type="match status" value="1"/>
</dbReference>
<dbReference type="SUPFAM" id="SSF69864">
    <property type="entry name" value="Argininosuccinate synthetase, C-terminal domain"/>
    <property type="match status" value="1"/>
</dbReference>
<dbReference type="PROSITE" id="PS00564">
    <property type="entry name" value="ARGININOSUCCIN_SYN_1"/>
    <property type="match status" value="1"/>
</dbReference>
<dbReference type="PROSITE" id="PS00565">
    <property type="entry name" value="ARGININOSUCCIN_SYN_2"/>
    <property type="match status" value="1"/>
</dbReference>
<accession>Q24ZG8</accession>
<evidence type="ECO:0000255" key="1">
    <source>
        <dbReference type="HAMAP-Rule" id="MF_00005"/>
    </source>
</evidence>
<comment type="catalytic activity">
    <reaction evidence="1">
        <text>L-citrulline + L-aspartate + ATP = 2-(N(omega)-L-arginino)succinate + AMP + diphosphate + H(+)</text>
        <dbReference type="Rhea" id="RHEA:10932"/>
        <dbReference type="ChEBI" id="CHEBI:15378"/>
        <dbReference type="ChEBI" id="CHEBI:29991"/>
        <dbReference type="ChEBI" id="CHEBI:30616"/>
        <dbReference type="ChEBI" id="CHEBI:33019"/>
        <dbReference type="ChEBI" id="CHEBI:57472"/>
        <dbReference type="ChEBI" id="CHEBI:57743"/>
        <dbReference type="ChEBI" id="CHEBI:456215"/>
        <dbReference type="EC" id="6.3.4.5"/>
    </reaction>
</comment>
<comment type="pathway">
    <text evidence="1">Amino-acid biosynthesis; L-arginine biosynthesis; L-arginine from L-ornithine and carbamoyl phosphate: step 2/3.</text>
</comment>
<comment type="subunit">
    <text evidence="1">Homotetramer.</text>
</comment>
<comment type="subcellular location">
    <subcellularLocation>
        <location evidence="1">Cytoplasm</location>
    </subcellularLocation>
</comment>
<comment type="similarity">
    <text evidence="1">Belongs to the argininosuccinate synthase family. Type 1 subfamily.</text>
</comment>
<name>ASSY_DESHY</name>